<dbReference type="EC" id="1.13.11.54" evidence="1"/>
<dbReference type="EC" id="1.13.11.53" evidence="1"/>
<dbReference type="EMBL" id="CP000393">
    <property type="protein sequence ID" value="ABG51861.1"/>
    <property type="molecule type" value="Genomic_DNA"/>
</dbReference>
<dbReference type="RefSeq" id="WP_011612223.1">
    <property type="nucleotide sequence ID" value="NC_008312.1"/>
</dbReference>
<dbReference type="SMR" id="Q111G3"/>
<dbReference type="STRING" id="203124.Tery_2668"/>
<dbReference type="KEGG" id="ter:Tery_2668"/>
<dbReference type="eggNOG" id="COG1791">
    <property type="taxonomic scope" value="Bacteria"/>
</dbReference>
<dbReference type="HOGENOM" id="CLU_125400_0_0_3"/>
<dbReference type="OrthoDB" id="9795636at2"/>
<dbReference type="UniPathway" id="UPA00904">
    <property type="reaction ID" value="UER00878"/>
</dbReference>
<dbReference type="GO" id="GO:0010308">
    <property type="term" value="F:acireductone dioxygenase (Ni2+-requiring) activity"/>
    <property type="evidence" value="ECO:0007669"/>
    <property type="project" value="UniProtKB-UniRule"/>
</dbReference>
<dbReference type="GO" id="GO:0010309">
    <property type="term" value="F:acireductone dioxygenase [iron(II)-requiring] activity"/>
    <property type="evidence" value="ECO:0007669"/>
    <property type="project" value="UniProtKB-UniRule"/>
</dbReference>
<dbReference type="GO" id="GO:0005506">
    <property type="term" value="F:iron ion binding"/>
    <property type="evidence" value="ECO:0007669"/>
    <property type="project" value="UniProtKB-UniRule"/>
</dbReference>
<dbReference type="GO" id="GO:0016151">
    <property type="term" value="F:nickel cation binding"/>
    <property type="evidence" value="ECO:0007669"/>
    <property type="project" value="UniProtKB-UniRule"/>
</dbReference>
<dbReference type="GO" id="GO:0019509">
    <property type="term" value="P:L-methionine salvage from methylthioadenosine"/>
    <property type="evidence" value="ECO:0007669"/>
    <property type="project" value="UniProtKB-UniRule"/>
</dbReference>
<dbReference type="GO" id="GO:0019284">
    <property type="term" value="P:L-methionine salvage from S-adenosylmethionine"/>
    <property type="evidence" value="ECO:0007669"/>
    <property type="project" value="InterPro"/>
</dbReference>
<dbReference type="CDD" id="cd02232">
    <property type="entry name" value="cupin_ARD"/>
    <property type="match status" value="1"/>
</dbReference>
<dbReference type="Gene3D" id="2.60.120.10">
    <property type="entry name" value="Jelly Rolls"/>
    <property type="match status" value="1"/>
</dbReference>
<dbReference type="HAMAP" id="MF_01682">
    <property type="entry name" value="Salvage_MtnD"/>
    <property type="match status" value="1"/>
</dbReference>
<dbReference type="InterPro" id="IPR004313">
    <property type="entry name" value="ARD"/>
</dbReference>
<dbReference type="InterPro" id="IPR023956">
    <property type="entry name" value="ARD_bac"/>
</dbReference>
<dbReference type="InterPro" id="IPR014710">
    <property type="entry name" value="RmlC-like_jellyroll"/>
</dbReference>
<dbReference type="InterPro" id="IPR011051">
    <property type="entry name" value="RmlC_Cupin_sf"/>
</dbReference>
<dbReference type="PANTHER" id="PTHR23418">
    <property type="entry name" value="ACIREDUCTONE DIOXYGENASE"/>
    <property type="match status" value="1"/>
</dbReference>
<dbReference type="PANTHER" id="PTHR23418:SF0">
    <property type="entry name" value="ACIREDUCTONE DIOXYGENASE"/>
    <property type="match status" value="1"/>
</dbReference>
<dbReference type="Pfam" id="PF03079">
    <property type="entry name" value="ARD"/>
    <property type="match status" value="1"/>
</dbReference>
<dbReference type="SUPFAM" id="SSF51182">
    <property type="entry name" value="RmlC-like cupins"/>
    <property type="match status" value="1"/>
</dbReference>
<reference key="1">
    <citation type="journal article" date="2015" name="Proc. Natl. Acad. Sci. U.S.A.">
        <title>Trichodesmium genome maintains abundant, widespread noncoding DNA in situ, despite oligotrophic lifestyle.</title>
        <authorList>
            <person name="Walworth N."/>
            <person name="Pfreundt U."/>
            <person name="Nelson W.C."/>
            <person name="Mincer T."/>
            <person name="Heidelberg J.F."/>
            <person name="Fu F."/>
            <person name="Waterbury J.B."/>
            <person name="Glavina del Rio T."/>
            <person name="Goodwin L."/>
            <person name="Kyrpides N.C."/>
            <person name="Land M.L."/>
            <person name="Woyke T."/>
            <person name="Hutchins D.A."/>
            <person name="Hess W.R."/>
            <person name="Webb E.A."/>
        </authorList>
    </citation>
    <scope>NUCLEOTIDE SEQUENCE [LARGE SCALE GENOMIC DNA]</scope>
    <source>
        <strain>IMS101</strain>
    </source>
</reference>
<proteinExistence type="inferred from homology"/>
<sequence>MAILKLEDGTIYTQLHDISRELSSLNIQLNHWPVGDNLETHNLLEKDVLSDDQKEEFLQSVDHYFEELKETAGYQSRDLLAIHPEIPNLDAILSKFDKCHTHADDEARYIVAGICIFGFVRPDDSQVELTLQPQEYINIPANTEHWFYLTPEKRVKAVRYFSSTEGWTPHYTSTEIHFKKS</sequence>
<name>MTND_TRIEI</name>
<feature type="chain" id="PRO_0000359245" description="Acireductone dioxygenase">
    <location>
        <begin position="1"/>
        <end position="181"/>
    </location>
</feature>
<feature type="binding site" evidence="1">
    <location>
        <position position="100"/>
    </location>
    <ligand>
        <name>Fe(2+)</name>
        <dbReference type="ChEBI" id="CHEBI:29033"/>
    </ligand>
</feature>
<feature type="binding site" evidence="1">
    <location>
        <position position="100"/>
    </location>
    <ligand>
        <name>Ni(2+)</name>
        <dbReference type="ChEBI" id="CHEBI:49786"/>
    </ligand>
</feature>
<feature type="binding site" evidence="1">
    <location>
        <position position="102"/>
    </location>
    <ligand>
        <name>Fe(2+)</name>
        <dbReference type="ChEBI" id="CHEBI:29033"/>
    </ligand>
</feature>
<feature type="binding site" evidence="1">
    <location>
        <position position="102"/>
    </location>
    <ligand>
        <name>Ni(2+)</name>
        <dbReference type="ChEBI" id="CHEBI:49786"/>
    </ligand>
</feature>
<feature type="binding site" evidence="1">
    <location>
        <position position="106"/>
    </location>
    <ligand>
        <name>Fe(2+)</name>
        <dbReference type="ChEBI" id="CHEBI:29033"/>
    </ligand>
</feature>
<feature type="binding site" evidence="1">
    <location>
        <position position="106"/>
    </location>
    <ligand>
        <name>Ni(2+)</name>
        <dbReference type="ChEBI" id="CHEBI:49786"/>
    </ligand>
</feature>
<feature type="binding site" evidence="1">
    <location>
        <position position="145"/>
    </location>
    <ligand>
        <name>Fe(2+)</name>
        <dbReference type="ChEBI" id="CHEBI:29033"/>
    </ligand>
</feature>
<feature type="binding site" evidence="1">
    <location>
        <position position="145"/>
    </location>
    <ligand>
        <name>Ni(2+)</name>
        <dbReference type="ChEBI" id="CHEBI:49786"/>
    </ligand>
</feature>
<feature type="site" description="May play a role in transmitting local conformational changes" evidence="1">
    <location>
        <position position="105"/>
    </location>
</feature>
<feature type="site" description="Important to generate the dianion" evidence="1">
    <location>
        <position position="108"/>
    </location>
</feature>
<evidence type="ECO:0000255" key="1">
    <source>
        <dbReference type="HAMAP-Rule" id="MF_01682"/>
    </source>
</evidence>
<keyword id="KW-0028">Amino-acid biosynthesis</keyword>
<keyword id="KW-0223">Dioxygenase</keyword>
<keyword id="KW-0408">Iron</keyword>
<keyword id="KW-0479">Metal-binding</keyword>
<keyword id="KW-0486">Methionine biosynthesis</keyword>
<keyword id="KW-0533">Nickel</keyword>
<keyword id="KW-0560">Oxidoreductase</keyword>
<comment type="function">
    <text evidence="1">Catalyzes 2 different reactions between oxygen and the acireductone 1,2-dihydroxy-3-keto-5-methylthiopentene (DHK-MTPene) depending upon the metal bound in the active site. Fe-containing acireductone dioxygenase (Fe-ARD) produces formate and 2-keto-4-methylthiobutyrate (KMTB), the alpha-ketoacid precursor of methionine in the methionine recycle pathway. Ni-containing acireductone dioxygenase (Ni-ARD) produces methylthiopropionate, carbon monoxide and formate, and does not lie on the methionine recycle pathway.</text>
</comment>
<comment type="catalytic activity">
    <reaction evidence="1">
        <text>1,2-dihydroxy-5-(methylsulfanyl)pent-1-en-3-one + O2 = 3-(methylsulfanyl)propanoate + CO + formate + 2 H(+)</text>
        <dbReference type="Rhea" id="RHEA:14161"/>
        <dbReference type="ChEBI" id="CHEBI:15378"/>
        <dbReference type="ChEBI" id="CHEBI:15379"/>
        <dbReference type="ChEBI" id="CHEBI:15740"/>
        <dbReference type="ChEBI" id="CHEBI:17245"/>
        <dbReference type="ChEBI" id="CHEBI:49016"/>
        <dbReference type="ChEBI" id="CHEBI:49252"/>
        <dbReference type="EC" id="1.13.11.53"/>
    </reaction>
</comment>
<comment type="catalytic activity">
    <reaction evidence="1">
        <text>1,2-dihydroxy-5-(methylsulfanyl)pent-1-en-3-one + O2 = 4-methylsulfanyl-2-oxobutanoate + formate + 2 H(+)</text>
        <dbReference type="Rhea" id="RHEA:24504"/>
        <dbReference type="ChEBI" id="CHEBI:15378"/>
        <dbReference type="ChEBI" id="CHEBI:15379"/>
        <dbReference type="ChEBI" id="CHEBI:15740"/>
        <dbReference type="ChEBI" id="CHEBI:16723"/>
        <dbReference type="ChEBI" id="CHEBI:49252"/>
        <dbReference type="EC" id="1.13.11.54"/>
    </reaction>
</comment>
<comment type="cofactor">
    <cofactor evidence="1">
        <name>Fe(2+)</name>
        <dbReference type="ChEBI" id="CHEBI:29033"/>
    </cofactor>
    <text evidence="1">Binds 1 Fe(2+) cation per monomer.</text>
</comment>
<comment type="cofactor">
    <cofactor evidence="1">
        <name>Ni(2+)</name>
        <dbReference type="ChEBI" id="CHEBI:49786"/>
    </cofactor>
    <text evidence="1">Binds 1 nickel ion per monomer.</text>
</comment>
<comment type="pathway">
    <text evidence="1">Amino-acid biosynthesis; L-methionine biosynthesis via salvage pathway; L-methionine from S-methyl-5-thio-alpha-D-ribose 1-phosphate: step 5/6.</text>
</comment>
<comment type="subunit">
    <text evidence="1">Monomer.</text>
</comment>
<comment type="similarity">
    <text evidence="1">Belongs to the acireductone dioxygenase (ARD) family.</text>
</comment>
<accession>Q111G3</accession>
<organism>
    <name type="scientific">Trichodesmium erythraeum (strain IMS101)</name>
    <dbReference type="NCBI Taxonomy" id="203124"/>
    <lineage>
        <taxon>Bacteria</taxon>
        <taxon>Bacillati</taxon>
        <taxon>Cyanobacteriota</taxon>
        <taxon>Cyanophyceae</taxon>
        <taxon>Oscillatoriophycideae</taxon>
        <taxon>Oscillatoriales</taxon>
        <taxon>Microcoleaceae</taxon>
        <taxon>Trichodesmium</taxon>
    </lineage>
</organism>
<gene>
    <name evidence="1" type="primary">mtnD</name>
    <name type="ordered locus">Tery_2668</name>
</gene>
<protein>
    <recommendedName>
        <fullName evidence="1">Acireductone dioxygenase</fullName>
    </recommendedName>
    <alternativeName>
        <fullName evidence="1">1,2-dihydroxy-3-keto-5-methylthiopentene dioxygenase</fullName>
        <shortName evidence="1">DHK-MTPene dioxygenase</shortName>
    </alternativeName>
    <alternativeName>
        <fullName evidence="1">Acireductone dioxygenase (Fe(2+)-requiring)</fullName>
        <shortName evidence="1">ARD'</shortName>
        <shortName evidence="1">Fe-ARD</shortName>
        <ecNumber evidence="1">1.13.11.54</ecNumber>
    </alternativeName>
    <alternativeName>
        <fullName evidence="1">Acireductone dioxygenase (Ni(2+)-requiring)</fullName>
        <shortName evidence="1">ARD</shortName>
        <shortName evidence="1">Ni-ARD</shortName>
        <ecNumber evidence="1">1.13.11.53</ecNumber>
    </alternativeName>
</protein>